<sequence length="83" mass="9407">MKTSMFLTLTGLVLLFVVCYASESEEKDFPKELLSSIFAADSDFKVEERGCLGDKCDYNNGCCSGYVCSRTWKWCVLAGPWRR</sequence>
<accession>B3FIS2</accession>
<proteinExistence type="evidence at transcript level"/>
<organism>
    <name type="scientific">Cyriopagopus schmidti</name>
    <name type="common">Chinese bird spider</name>
    <name type="synonym">Haplopelma schmidti</name>
    <dbReference type="NCBI Taxonomy" id="29017"/>
    <lineage>
        <taxon>Eukaryota</taxon>
        <taxon>Metazoa</taxon>
        <taxon>Ecdysozoa</taxon>
        <taxon>Arthropoda</taxon>
        <taxon>Chelicerata</taxon>
        <taxon>Arachnida</taxon>
        <taxon>Araneae</taxon>
        <taxon>Mygalomorphae</taxon>
        <taxon>Theraphosidae</taxon>
        <taxon>Cyriopagopus</taxon>
    </lineage>
</organism>
<reference key="1">
    <citation type="journal article" date="2008" name="Toxicon">
        <title>Molecular diversification based on analysis of expressed sequence tags from the venom glands of the Chinese bird spider Ornithoctonus huwena.</title>
        <authorList>
            <person name="Jiang L."/>
            <person name="Peng L."/>
            <person name="Chen J."/>
            <person name="Zhang Y."/>
            <person name="Xiong X."/>
            <person name="Liang S."/>
        </authorList>
    </citation>
    <scope>NUCLEOTIDE SEQUENCE [MRNA]</scope>
    <source>
        <tissue>Venom gland</tissue>
    </source>
</reference>
<dbReference type="EMBL" id="EU195266">
    <property type="protein sequence ID" value="ABY77719.1"/>
    <property type="molecule type" value="mRNA"/>
</dbReference>
<dbReference type="BMRB" id="B3FIS2"/>
<dbReference type="SMR" id="B3FIS2"/>
<dbReference type="ArachnoServer" id="AS000355">
    <property type="toxin name" value="U5-theraphotoxin-Hs1a"/>
</dbReference>
<dbReference type="GO" id="GO:0005576">
    <property type="term" value="C:extracellular region"/>
    <property type="evidence" value="ECO:0007669"/>
    <property type="project" value="UniProtKB-SubCell"/>
</dbReference>
<dbReference type="GO" id="GO:0030246">
    <property type="term" value="F:carbohydrate binding"/>
    <property type="evidence" value="ECO:0007669"/>
    <property type="project" value="UniProtKB-KW"/>
</dbReference>
<dbReference type="GO" id="GO:0008200">
    <property type="term" value="F:ion channel inhibitor activity"/>
    <property type="evidence" value="ECO:0007669"/>
    <property type="project" value="InterPro"/>
</dbReference>
<dbReference type="GO" id="GO:0090729">
    <property type="term" value="F:toxin activity"/>
    <property type="evidence" value="ECO:0007669"/>
    <property type="project" value="UniProtKB-KW"/>
</dbReference>
<dbReference type="InterPro" id="IPR011696">
    <property type="entry name" value="Huwentoxin-1"/>
</dbReference>
<dbReference type="InterPro" id="IPR013140">
    <property type="entry name" value="Huwentoxin_CS1"/>
</dbReference>
<dbReference type="Pfam" id="PF07740">
    <property type="entry name" value="Toxin_12"/>
    <property type="match status" value="1"/>
</dbReference>
<dbReference type="SUPFAM" id="SSF57059">
    <property type="entry name" value="omega toxin-like"/>
    <property type="match status" value="1"/>
</dbReference>
<dbReference type="PROSITE" id="PS60021">
    <property type="entry name" value="HWTX_1"/>
    <property type="match status" value="1"/>
</dbReference>
<name>TXLA3_CYRSC</name>
<feature type="signal peptide" evidence="4">
    <location>
        <begin position="1"/>
        <end position="21"/>
    </location>
</feature>
<feature type="propeptide" id="PRO_0000380166" evidence="1">
    <location>
        <begin position="22"/>
        <end position="49"/>
    </location>
</feature>
<feature type="chain" id="PRO_0000380167" description="U5-theraphotoxin-Hs1a 3">
    <location>
        <begin position="50"/>
        <end position="81"/>
    </location>
</feature>
<feature type="disulfide bond" evidence="2">
    <location>
        <begin position="51"/>
        <end position="63"/>
    </location>
</feature>
<feature type="disulfide bond" evidence="2">
    <location>
        <begin position="56"/>
        <end position="68"/>
    </location>
</feature>
<feature type="disulfide bond" evidence="2">
    <location>
        <begin position="62"/>
        <end position="75"/>
    </location>
</feature>
<comment type="function">
    <text evidence="3">Agglutinates erythrocytes.</text>
</comment>
<comment type="subcellular location">
    <subcellularLocation>
        <location evidence="1">Secreted</location>
    </subcellularLocation>
</comment>
<comment type="tissue specificity">
    <text>Expressed by the venom gland.</text>
</comment>
<comment type="domain">
    <text>The presence of a 'disulfide through disulfide knot' structurally defines this protein as a knottin.</text>
</comment>
<comment type="similarity">
    <text evidence="5">Belongs to the neurotoxin 10 (Hwtx-1) family. 51 (Hntx-8) subfamily. Hntx-8 sub-subfamily.</text>
</comment>
<protein>
    <recommendedName>
        <fullName>U5-theraphotoxin-Hs1a 3</fullName>
        <shortName>U5-TRTX-Hs1a</shortName>
    </recommendedName>
    <alternativeName>
        <fullName>Lectin SHL-Ia3</fullName>
    </alternativeName>
</protein>
<keyword id="KW-0165">Cleavage on pair of basic residues</keyword>
<keyword id="KW-1015">Disulfide bond</keyword>
<keyword id="KW-0960">Knottin</keyword>
<keyword id="KW-0430">Lectin</keyword>
<keyword id="KW-0964">Secreted</keyword>
<keyword id="KW-0732">Signal</keyword>
<keyword id="KW-0800">Toxin</keyword>
<evidence type="ECO:0000250" key="1"/>
<evidence type="ECO:0000250" key="2">
    <source>
        <dbReference type="UniProtKB" id="B3FIS6"/>
    </source>
</evidence>
<evidence type="ECO:0000250" key="3">
    <source>
        <dbReference type="UniProtKB" id="Q86C51"/>
    </source>
</evidence>
<evidence type="ECO:0000255" key="4"/>
<evidence type="ECO:0000305" key="5"/>